<comment type="function">
    <text evidence="1">Part of the MsrPQ system that repairs oxidized periplasmic proteins containing methionine sulfoxide residues (Met-O), using respiratory chain electrons. Thus protects these proteins from oxidative-stress damage caused by reactive species of oxygen and chlorine generated by the host defense mechanisms. MsrPQ is essential for the maintenance of envelope integrity under bleach stress, rescuing a wide series of structurally unrelated periplasmic proteins from methionine oxidation, including the primary periplasmic chaperone SurA and the lipoprotein Pal. MsrQ provides electrons for reduction to the reductase catalytic subunit MsrP, using the quinone pool of the respiratory chain.</text>
</comment>
<comment type="cofactor">
    <cofactor evidence="1">
        <name>FMN</name>
        <dbReference type="ChEBI" id="CHEBI:58210"/>
    </cofactor>
    <text evidence="1">Binds 1 FMN per subunit.</text>
</comment>
<comment type="cofactor">
    <cofactor evidence="1">
        <name>heme b</name>
        <dbReference type="ChEBI" id="CHEBI:60344"/>
    </cofactor>
    <text evidence="1">Binds 1 heme b (iron(II)-protoporphyrin IX) group per subunit.</text>
</comment>
<comment type="subunit">
    <text evidence="1">Heterodimer of a catalytic subunit (MsrP) and a heme-binding subunit (MsrQ).</text>
</comment>
<comment type="subcellular location">
    <subcellularLocation>
        <location evidence="1">Cell inner membrane</location>
        <topology evidence="1">Multi-pass membrane protein</topology>
    </subcellularLocation>
</comment>
<comment type="similarity">
    <text evidence="1">Belongs to the MsrQ family.</text>
</comment>
<dbReference type="EMBL" id="AE014075">
    <property type="protein sequence ID" value="AAN80849.1"/>
    <property type="molecule type" value="Genomic_DNA"/>
</dbReference>
<dbReference type="RefSeq" id="WP_001240078.1">
    <property type="nucleotide sequence ID" value="NZ_CP051263.1"/>
</dbReference>
<dbReference type="SMR" id="Q8FGI6"/>
<dbReference type="STRING" id="199310.c2390"/>
<dbReference type="KEGG" id="ecc:c2390"/>
<dbReference type="eggNOG" id="COG2717">
    <property type="taxonomic scope" value="Bacteria"/>
</dbReference>
<dbReference type="HOGENOM" id="CLU_080662_0_1_6"/>
<dbReference type="BioCyc" id="ECOL199310:C2390-MONOMER"/>
<dbReference type="Proteomes" id="UP000001410">
    <property type="component" value="Chromosome"/>
</dbReference>
<dbReference type="GO" id="GO:0005886">
    <property type="term" value="C:plasma membrane"/>
    <property type="evidence" value="ECO:0007669"/>
    <property type="project" value="UniProtKB-SubCell"/>
</dbReference>
<dbReference type="GO" id="GO:0009055">
    <property type="term" value="F:electron transfer activity"/>
    <property type="evidence" value="ECO:0007669"/>
    <property type="project" value="UniProtKB-UniRule"/>
</dbReference>
<dbReference type="GO" id="GO:0010181">
    <property type="term" value="F:FMN binding"/>
    <property type="evidence" value="ECO:0007669"/>
    <property type="project" value="UniProtKB-UniRule"/>
</dbReference>
<dbReference type="GO" id="GO:0020037">
    <property type="term" value="F:heme binding"/>
    <property type="evidence" value="ECO:0007669"/>
    <property type="project" value="UniProtKB-UniRule"/>
</dbReference>
<dbReference type="GO" id="GO:0046872">
    <property type="term" value="F:metal ion binding"/>
    <property type="evidence" value="ECO:0007669"/>
    <property type="project" value="UniProtKB-KW"/>
</dbReference>
<dbReference type="GO" id="GO:0016679">
    <property type="term" value="F:oxidoreductase activity, acting on diphenols and related substances as donors"/>
    <property type="evidence" value="ECO:0007669"/>
    <property type="project" value="TreeGrafter"/>
</dbReference>
<dbReference type="GO" id="GO:0030091">
    <property type="term" value="P:protein repair"/>
    <property type="evidence" value="ECO:0007669"/>
    <property type="project" value="UniProtKB-UniRule"/>
</dbReference>
<dbReference type="HAMAP" id="MF_01207">
    <property type="entry name" value="MsrQ"/>
    <property type="match status" value="1"/>
</dbReference>
<dbReference type="InterPro" id="IPR013130">
    <property type="entry name" value="Fe3_Rdtase_TM_dom"/>
</dbReference>
<dbReference type="InterPro" id="IPR022837">
    <property type="entry name" value="MsrQ-like"/>
</dbReference>
<dbReference type="NCBIfam" id="NF003830">
    <property type="entry name" value="PRK05419.1-1"/>
    <property type="match status" value="1"/>
</dbReference>
<dbReference type="NCBIfam" id="NF003831">
    <property type="entry name" value="PRK05419.1-2"/>
    <property type="match status" value="1"/>
</dbReference>
<dbReference type="NCBIfam" id="NF003832">
    <property type="entry name" value="PRK05419.1-4"/>
    <property type="match status" value="1"/>
</dbReference>
<dbReference type="PANTHER" id="PTHR36964">
    <property type="entry name" value="PROTEIN-METHIONINE-SULFOXIDE REDUCTASE HEME-BINDING SUBUNIT MSRQ"/>
    <property type="match status" value="1"/>
</dbReference>
<dbReference type="PANTHER" id="PTHR36964:SF1">
    <property type="entry name" value="PROTEIN-METHIONINE-SULFOXIDE REDUCTASE HEME-BINDING SUBUNIT MSRQ"/>
    <property type="match status" value="1"/>
</dbReference>
<dbReference type="Pfam" id="PF01794">
    <property type="entry name" value="Ferric_reduct"/>
    <property type="match status" value="1"/>
</dbReference>
<sequence>MRLTAKQVTWLKVCLHLAGLLPFLWLVWAINHGGLGADPVKDIQHFTGRTALKFLLAALLITPLARYAKQPLLIRTRRLLGLWCFAWATLHLTSYALLELGVNNLALLGKELITRPYLTLGIISWVILLALAFTSTQSMQRKLGKHWQQLHNFVYLVAILAPIHYLWSVKIISPQPLIYAGLAVLLLALRYKKLLSLFNRLRKQAHNKLSL</sequence>
<evidence type="ECO:0000255" key="1">
    <source>
        <dbReference type="HAMAP-Rule" id="MF_01207"/>
    </source>
</evidence>
<feature type="chain" id="PRO_0000091575" description="Protein-methionine-sulfoxide reductase heme-binding subunit MsrQ">
    <location>
        <begin position="1"/>
        <end position="211"/>
    </location>
</feature>
<feature type="transmembrane region" description="Helical" evidence="1">
    <location>
        <begin position="10"/>
        <end position="30"/>
    </location>
</feature>
<feature type="transmembrane region" description="Helical" evidence="1">
    <location>
        <begin position="54"/>
        <end position="74"/>
    </location>
</feature>
<feature type="transmembrane region" description="Helical" evidence="1">
    <location>
        <begin position="82"/>
        <end position="102"/>
    </location>
</feature>
<feature type="transmembrane region" description="Helical" evidence="1">
    <location>
        <begin position="116"/>
        <end position="136"/>
    </location>
</feature>
<feature type="transmembrane region" description="Helical" evidence="1">
    <location>
        <begin position="153"/>
        <end position="173"/>
    </location>
</feature>
<feature type="transmembrane region" description="Helical" evidence="1">
    <location>
        <begin position="178"/>
        <end position="198"/>
    </location>
</feature>
<accession>Q8FGI6</accession>
<gene>
    <name evidence="1" type="primary">msrQ</name>
    <name type="synonym">yedZ</name>
    <name type="ordered locus">c2390</name>
</gene>
<reference key="1">
    <citation type="journal article" date="2002" name="Proc. Natl. Acad. Sci. U.S.A.">
        <title>Extensive mosaic structure revealed by the complete genome sequence of uropathogenic Escherichia coli.</title>
        <authorList>
            <person name="Welch R.A."/>
            <person name="Burland V."/>
            <person name="Plunkett G. III"/>
            <person name="Redford P."/>
            <person name="Roesch P."/>
            <person name="Rasko D."/>
            <person name="Buckles E.L."/>
            <person name="Liou S.-R."/>
            <person name="Boutin A."/>
            <person name="Hackett J."/>
            <person name="Stroud D."/>
            <person name="Mayhew G.F."/>
            <person name="Rose D.J."/>
            <person name="Zhou S."/>
            <person name="Schwartz D.C."/>
            <person name="Perna N.T."/>
            <person name="Mobley H.L.T."/>
            <person name="Donnenberg M.S."/>
            <person name="Blattner F.R."/>
        </authorList>
    </citation>
    <scope>NUCLEOTIDE SEQUENCE [LARGE SCALE GENOMIC DNA]</scope>
    <source>
        <strain>CFT073 / ATCC 700928 / UPEC</strain>
    </source>
</reference>
<name>MSRQ_ECOL6</name>
<organism>
    <name type="scientific">Escherichia coli O6:H1 (strain CFT073 / ATCC 700928 / UPEC)</name>
    <dbReference type="NCBI Taxonomy" id="199310"/>
    <lineage>
        <taxon>Bacteria</taxon>
        <taxon>Pseudomonadati</taxon>
        <taxon>Pseudomonadota</taxon>
        <taxon>Gammaproteobacteria</taxon>
        <taxon>Enterobacterales</taxon>
        <taxon>Enterobacteriaceae</taxon>
        <taxon>Escherichia</taxon>
    </lineage>
</organism>
<protein>
    <recommendedName>
        <fullName evidence="1">Protein-methionine-sulfoxide reductase heme-binding subunit MsrQ</fullName>
    </recommendedName>
    <alternativeName>
        <fullName evidence="1">Flavocytochrome MsrQ</fullName>
    </alternativeName>
</protein>
<keyword id="KW-0997">Cell inner membrane</keyword>
<keyword id="KW-1003">Cell membrane</keyword>
<keyword id="KW-0249">Electron transport</keyword>
<keyword id="KW-0285">Flavoprotein</keyword>
<keyword id="KW-0288">FMN</keyword>
<keyword id="KW-0349">Heme</keyword>
<keyword id="KW-0408">Iron</keyword>
<keyword id="KW-0472">Membrane</keyword>
<keyword id="KW-0479">Metal-binding</keyword>
<keyword id="KW-1185">Reference proteome</keyword>
<keyword id="KW-0812">Transmembrane</keyword>
<keyword id="KW-1133">Transmembrane helix</keyword>
<keyword id="KW-0813">Transport</keyword>
<proteinExistence type="inferred from homology"/>